<name>YR776_MIMIV</name>
<organism>
    <name type="scientific">Acanthamoeba polyphaga mimivirus</name>
    <name type="common">APMV</name>
    <dbReference type="NCBI Taxonomy" id="212035"/>
    <lineage>
        <taxon>Viruses</taxon>
        <taxon>Varidnaviria</taxon>
        <taxon>Bamfordvirae</taxon>
        <taxon>Nucleocytoviricota</taxon>
        <taxon>Megaviricetes</taxon>
        <taxon>Imitervirales</taxon>
        <taxon>Mimiviridae</taxon>
        <taxon>Megamimivirinae</taxon>
        <taxon>Mimivirus</taxon>
        <taxon>Mimivirus bradfordmassiliense</taxon>
    </lineage>
</organism>
<sequence>MSKLVKTTVASSAIAIISYKLGDQIFNLIGNFFTDNLLAKIEIDSSLNPKLFFAIKTELEKFVDSSKLLKINDFGSQIRYELNVGFYKIKTRKHGWIFVNYVDNKLILYKLPKISFFPPQIKKQTNRLKKFIDSVHSISCRPDEMRMCYTSNNNNWSYPIIRRPCKFLDSNLTTEMRSVLKDVDVFMRNEDTYRELGANYRRGMLLYGESGCGKTGLISIISNKYGMDSYILNLNSKDMSDSVLISLASNVKARSILVIEEIDKQIETLNANGNKNVSIGGLLSALDGPQGLAHVLCYNDSQCDIFFQQITWKL</sequence>
<organismHost>
    <name type="scientific">Acanthamoeba polyphaga</name>
    <name type="common">Amoeba</name>
    <dbReference type="NCBI Taxonomy" id="5757"/>
</organismHost>
<reference key="1">
    <citation type="journal article" date="2004" name="Science">
        <title>The 1.2-megabase genome sequence of Mimivirus.</title>
        <authorList>
            <person name="Raoult D."/>
            <person name="Audic S."/>
            <person name="Robert C."/>
            <person name="Abergel C."/>
            <person name="Renesto P."/>
            <person name="Ogata H."/>
            <person name="La Scola B."/>
            <person name="Susan M."/>
            <person name="Claverie J.-M."/>
        </authorList>
    </citation>
    <scope>NUCLEOTIDE SEQUENCE [LARGE SCALE GENOMIC DNA]</scope>
    <source>
        <strain>Rowbotham-Bradford</strain>
    </source>
</reference>
<feature type="chain" id="PRO_0000253435" description="Uncharacterized protein R776">
    <location>
        <begin position="1"/>
        <end position="314"/>
    </location>
</feature>
<dbReference type="EMBL" id="AY653733">
    <property type="protein sequence ID" value="AAV51036.1"/>
    <property type="molecule type" value="Genomic_DNA"/>
</dbReference>
<dbReference type="Proteomes" id="UP000001134">
    <property type="component" value="Genome"/>
</dbReference>
<dbReference type="GO" id="GO:0005524">
    <property type="term" value="F:ATP binding"/>
    <property type="evidence" value="ECO:0007669"/>
    <property type="project" value="InterPro"/>
</dbReference>
<dbReference type="GO" id="GO:0016887">
    <property type="term" value="F:ATP hydrolysis activity"/>
    <property type="evidence" value="ECO:0007669"/>
    <property type="project" value="InterPro"/>
</dbReference>
<dbReference type="Gene3D" id="3.40.50.300">
    <property type="entry name" value="P-loop containing nucleotide triphosphate hydrolases"/>
    <property type="match status" value="1"/>
</dbReference>
<dbReference type="InterPro" id="IPR003959">
    <property type="entry name" value="ATPase_AAA_core"/>
</dbReference>
<dbReference type="InterPro" id="IPR050747">
    <property type="entry name" value="Mitochondrial_chaperone_BCS1"/>
</dbReference>
<dbReference type="InterPro" id="IPR027417">
    <property type="entry name" value="P-loop_NTPase"/>
</dbReference>
<dbReference type="PANTHER" id="PTHR23070">
    <property type="entry name" value="BCS1 AAA-TYPE ATPASE"/>
    <property type="match status" value="1"/>
</dbReference>
<dbReference type="Pfam" id="PF00004">
    <property type="entry name" value="AAA"/>
    <property type="match status" value="1"/>
</dbReference>
<dbReference type="SUPFAM" id="SSF52540">
    <property type="entry name" value="P-loop containing nucleoside triphosphate hydrolases"/>
    <property type="match status" value="1"/>
</dbReference>
<protein>
    <recommendedName>
        <fullName>Uncharacterized protein R776</fullName>
    </recommendedName>
</protein>
<accession>Q5UPR4</accession>
<gene>
    <name type="ordered locus">MIMI_R776</name>
</gene>
<keyword id="KW-1185">Reference proteome</keyword>
<proteinExistence type="predicted"/>